<proteinExistence type="inferred from homology"/>
<name>IF1_MYCLE</name>
<keyword id="KW-0963">Cytoplasm</keyword>
<keyword id="KW-0396">Initiation factor</keyword>
<keyword id="KW-0648">Protein biosynthesis</keyword>
<keyword id="KW-1185">Reference proteome</keyword>
<keyword id="KW-0694">RNA-binding</keyword>
<keyword id="KW-0699">rRNA-binding</keyword>
<accession>P0A5H7</accession>
<accession>P45957</accession>
<feature type="initiator methionine" description="Removed" evidence="1">
    <location>
        <position position="1"/>
    </location>
</feature>
<feature type="chain" id="PRO_0000095830" description="Translation initiation factor IF-1">
    <location>
        <begin position="2"/>
        <end position="73"/>
    </location>
</feature>
<feature type="domain" description="S1-like" evidence="2">
    <location>
        <begin position="2"/>
        <end position="73"/>
    </location>
</feature>
<dbReference type="EMBL" id="AL049491">
    <property type="protein sequence ID" value="CAB39838.1"/>
    <property type="molecule type" value="Genomic_DNA"/>
</dbReference>
<dbReference type="EMBL" id="AL583923">
    <property type="protein sequence ID" value="CAC30917.1"/>
    <property type="molecule type" value="Genomic_DNA"/>
</dbReference>
<dbReference type="PIR" id="E87154">
    <property type="entry name" value="E87154"/>
</dbReference>
<dbReference type="RefSeq" id="NP_302327.1">
    <property type="nucleotide sequence ID" value="NC_002677.1"/>
</dbReference>
<dbReference type="RefSeq" id="WP_003418601.1">
    <property type="nucleotide sequence ID" value="NC_002677.1"/>
</dbReference>
<dbReference type="SMR" id="P0A5H7"/>
<dbReference type="STRING" id="272631.gene:17575814"/>
<dbReference type="GeneID" id="98799387"/>
<dbReference type="KEGG" id="mle:ML1962"/>
<dbReference type="PATRIC" id="fig|272631.5.peg.3712"/>
<dbReference type="Leproma" id="ML1962"/>
<dbReference type="eggNOG" id="COG0361">
    <property type="taxonomic scope" value="Bacteria"/>
</dbReference>
<dbReference type="HOGENOM" id="CLU_151267_1_0_11"/>
<dbReference type="OrthoDB" id="9803250at2"/>
<dbReference type="PRO" id="PR:P0A5H7"/>
<dbReference type="Proteomes" id="UP000000806">
    <property type="component" value="Chromosome"/>
</dbReference>
<dbReference type="GO" id="GO:0005829">
    <property type="term" value="C:cytosol"/>
    <property type="evidence" value="ECO:0007669"/>
    <property type="project" value="TreeGrafter"/>
</dbReference>
<dbReference type="GO" id="GO:0043022">
    <property type="term" value="F:ribosome binding"/>
    <property type="evidence" value="ECO:0007669"/>
    <property type="project" value="UniProtKB-UniRule"/>
</dbReference>
<dbReference type="GO" id="GO:0019843">
    <property type="term" value="F:rRNA binding"/>
    <property type="evidence" value="ECO:0007669"/>
    <property type="project" value="UniProtKB-UniRule"/>
</dbReference>
<dbReference type="GO" id="GO:0003743">
    <property type="term" value="F:translation initiation factor activity"/>
    <property type="evidence" value="ECO:0007669"/>
    <property type="project" value="UniProtKB-UniRule"/>
</dbReference>
<dbReference type="CDD" id="cd04451">
    <property type="entry name" value="S1_IF1"/>
    <property type="match status" value="1"/>
</dbReference>
<dbReference type="FunFam" id="2.40.50.140:FF:000002">
    <property type="entry name" value="Translation initiation factor IF-1"/>
    <property type="match status" value="1"/>
</dbReference>
<dbReference type="Gene3D" id="2.40.50.140">
    <property type="entry name" value="Nucleic acid-binding proteins"/>
    <property type="match status" value="1"/>
</dbReference>
<dbReference type="HAMAP" id="MF_00075">
    <property type="entry name" value="IF_1"/>
    <property type="match status" value="1"/>
</dbReference>
<dbReference type="InterPro" id="IPR012340">
    <property type="entry name" value="NA-bd_OB-fold"/>
</dbReference>
<dbReference type="InterPro" id="IPR006196">
    <property type="entry name" value="RNA-binding_domain_S1_IF1"/>
</dbReference>
<dbReference type="InterPro" id="IPR004368">
    <property type="entry name" value="TIF_IF1"/>
</dbReference>
<dbReference type="NCBIfam" id="TIGR00008">
    <property type="entry name" value="infA"/>
    <property type="match status" value="1"/>
</dbReference>
<dbReference type="PANTHER" id="PTHR33370">
    <property type="entry name" value="TRANSLATION INITIATION FACTOR IF-1, CHLOROPLASTIC"/>
    <property type="match status" value="1"/>
</dbReference>
<dbReference type="PANTHER" id="PTHR33370:SF1">
    <property type="entry name" value="TRANSLATION INITIATION FACTOR IF-1, CHLOROPLASTIC"/>
    <property type="match status" value="1"/>
</dbReference>
<dbReference type="Pfam" id="PF01176">
    <property type="entry name" value="eIF-1a"/>
    <property type="match status" value="1"/>
</dbReference>
<dbReference type="SUPFAM" id="SSF50249">
    <property type="entry name" value="Nucleic acid-binding proteins"/>
    <property type="match status" value="1"/>
</dbReference>
<dbReference type="PROSITE" id="PS50832">
    <property type="entry name" value="S1_IF1_TYPE"/>
    <property type="match status" value="1"/>
</dbReference>
<comment type="function">
    <text evidence="2">One of the essential components for the initiation of protein synthesis. Stabilizes the binding of IF-2 and IF-3 on the 30S subunit to which N-formylmethionyl-tRNA(fMet) subsequently binds. Helps modulate mRNA selection, yielding the 30S pre-initiation complex (PIC). Upon addition of the 50S ribosomal subunit IF-1, IF-2 and IF-3 are released leaving the mature 70S translation initiation complex.</text>
</comment>
<comment type="subunit">
    <text evidence="2">Component of the 30S ribosomal translation pre-initiation complex which assembles on the 30S ribosome in the order IF-2 and IF-3, IF-1 and N-formylmethionyl-tRNA(fMet); mRNA recruitment can occur at any time during PIC assembly.</text>
</comment>
<comment type="subcellular location">
    <subcellularLocation>
        <location evidence="2">Cytoplasm</location>
    </subcellularLocation>
</comment>
<comment type="similarity">
    <text evidence="2">Belongs to the IF-1 family.</text>
</comment>
<gene>
    <name evidence="2" type="primary">infA</name>
    <name type="ordered locus">ML1962</name>
</gene>
<sequence>MAKKDGAIEVEGRVVEPLPNAMFRIELENGHKVLAHISGKMRQHYIRILPEDRVVVELSPYDLSRGRIVYRYK</sequence>
<reference key="1">
    <citation type="journal article" date="2001" name="Nature">
        <title>Massive gene decay in the leprosy bacillus.</title>
        <authorList>
            <person name="Cole S.T."/>
            <person name="Eiglmeier K."/>
            <person name="Parkhill J."/>
            <person name="James K.D."/>
            <person name="Thomson N.R."/>
            <person name="Wheeler P.R."/>
            <person name="Honore N."/>
            <person name="Garnier T."/>
            <person name="Churcher C.M."/>
            <person name="Harris D.E."/>
            <person name="Mungall K.L."/>
            <person name="Basham D."/>
            <person name="Brown D."/>
            <person name="Chillingworth T."/>
            <person name="Connor R."/>
            <person name="Davies R.M."/>
            <person name="Devlin K."/>
            <person name="Duthoy S."/>
            <person name="Feltwell T."/>
            <person name="Fraser A."/>
            <person name="Hamlin N."/>
            <person name="Holroyd S."/>
            <person name="Hornsby T."/>
            <person name="Jagels K."/>
            <person name="Lacroix C."/>
            <person name="Maclean J."/>
            <person name="Moule S."/>
            <person name="Murphy L.D."/>
            <person name="Oliver K."/>
            <person name="Quail M.A."/>
            <person name="Rajandream M.A."/>
            <person name="Rutherford K.M."/>
            <person name="Rutter S."/>
            <person name="Seeger K."/>
            <person name="Simon S."/>
            <person name="Simmonds M."/>
            <person name="Skelton J."/>
            <person name="Squares R."/>
            <person name="Squares S."/>
            <person name="Stevens K."/>
            <person name="Taylor K."/>
            <person name="Whitehead S."/>
            <person name="Woodward J.R."/>
            <person name="Barrell B.G."/>
        </authorList>
    </citation>
    <scope>NUCLEOTIDE SEQUENCE [LARGE SCALE GENOMIC DNA]</scope>
    <source>
        <strain>TN</strain>
    </source>
</reference>
<protein>
    <recommendedName>
        <fullName evidence="2">Translation initiation factor IF-1</fullName>
    </recommendedName>
</protein>
<evidence type="ECO:0000250" key="1"/>
<evidence type="ECO:0000255" key="2">
    <source>
        <dbReference type="HAMAP-Rule" id="MF_00075"/>
    </source>
</evidence>
<organism>
    <name type="scientific">Mycobacterium leprae (strain TN)</name>
    <dbReference type="NCBI Taxonomy" id="272631"/>
    <lineage>
        <taxon>Bacteria</taxon>
        <taxon>Bacillati</taxon>
        <taxon>Actinomycetota</taxon>
        <taxon>Actinomycetes</taxon>
        <taxon>Mycobacteriales</taxon>
        <taxon>Mycobacteriaceae</taxon>
        <taxon>Mycobacterium</taxon>
    </lineage>
</organism>